<reference key="1">
    <citation type="journal article" date="2001" name="Nature">
        <title>Complete genome sequence of Salmonella enterica serovar Typhimurium LT2.</title>
        <authorList>
            <person name="McClelland M."/>
            <person name="Sanderson K.E."/>
            <person name="Spieth J."/>
            <person name="Clifton S.W."/>
            <person name="Latreille P."/>
            <person name="Courtney L."/>
            <person name="Porwollik S."/>
            <person name="Ali J."/>
            <person name="Dante M."/>
            <person name="Du F."/>
            <person name="Hou S."/>
            <person name="Layman D."/>
            <person name="Leonard S."/>
            <person name="Nguyen C."/>
            <person name="Scott K."/>
            <person name="Holmes A."/>
            <person name="Grewal N."/>
            <person name="Mulvaney E."/>
            <person name="Ryan E."/>
            <person name="Sun H."/>
            <person name="Florea L."/>
            <person name="Miller W."/>
            <person name="Stoneking T."/>
            <person name="Nhan M."/>
            <person name="Waterston R."/>
            <person name="Wilson R.K."/>
        </authorList>
    </citation>
    <scope>NUCLEOTIDE SEQUENCE [LARGE SCALE GENOMIC DNA]</scope>
    <source>
        <strain>LT2 / SGSC1412 / ATCC 700720</strain>
    </source>
</reference>
<dbReference type="EMBL" id="AE006468">
    <property type="protein sequence ID" value="AAL19735.1"/>
    <property type="molecule type" value="Genomic_DNA"/>
</dbReference>
<dbReference type="RefSeq" id="NP_459776.1">
    <property type="nucleotide sequence ID" value="NC_003197.2"/>
</dbReference>
<dbReference type="RefSeq" id="WP_000042502.1">
    <property type="nucleotide sequence ID" value="NC_003197.2"/>
</dbReference>
<dbReference type="SMR" id="Q8ZQQ4"/>
<dbReference type="STRING" id="99287.STM0798"/>
<dbReference type="PaxDb" id="99287-STM0798"/>
<dbReference type="GeneID" id="1252318"/>
<dbReference type="KEGG" id="stm:STM0798"/>
<dbReference type="PATRIC" id="fig|99287.12.peg.832"/>
<dbReference type="HOGENOM" id="CLU_009621_2_1_6"/>
<dbReference type="OMA" id="RYMHSEI"/>
<dbReference type="PhylomeDB" id="Q8ZQQ4"/>
<dbReference type="BioCyc" id="SENT99287:STM0798-MONOMER"/>
<dbReference type="Proteomes" id="UP000001014">
    <property type="component" value="Chromosome"/>
</dbReference>
<dbReference type="GO" id="GO:0005737">
    <property type="term" value="C:cytoplasm"/>
    <property type="evidence" value="ECO:0007669"/>
    <property type="project" value="UniProtKB-SubCell"/>
</dbReference>
<dbReference type="GO" id="GO:0009380">
    <property type="term" value="C:excinuclease repair complex"/>
    <property type="evidence" value="ECO:0000318"/>
    <property type="project" value="GO_Central"/>
</dbReference>
<dbReference type="GO" id="GO:0005524">
    <property type="term" value="F:ATP binding"/>
    <property type="evidence" value="ECO:0007669"/>
    <property type="project" value="UniProtKB-UniRule"/>
</dbReference>
<dbReference type="GO" id="GO:0016887">
    <property type="term" value="F:ATP hydrolysis activity"/>
    <property type="evidence" value="ECO:0007669"/>
    <property type="project" value="InterPro"/>
</dbReference>
<dbReference type="GO" id="GO:0003677">
    <property type="term" value="F:DNA binding"/>
    <property type="evidence" value="ECO:0007669"/>
    <property type="project" value="UniProtKB-UniRule"/>
</dbReference>
<dbReference type="GO" id="GO:0009381">
    <property type="term" value="F:excinuclease ABC activity"/>
    <property type="evidence" value="ECO:0007669"/>
    <property type="project" value="UniProtKB-UniRule"/>
</dbReference>
<dbReference type="GO" id="GO:0000715">
    <property type="term" value="P:nucleotide-excision repair, DNA damage recognition"/>
    <property type="evidence" value="ECO:0000318"/>
    <property type="project" value="GO_Central"/>
</dbReference>
<dbReference type="GO" id="GO:0009432">
    <property type="term" value="P:SOS response"/>
    <property type="evidence" value="ECO:0007669"/>
    <property type="project" value="UniProtKB-UniRule"/>
</dbReference>
<dbReference type="CDD" id="cd17916">
    <property type="entry name" value="DEXHc_UvrB"/>
    <property type="match status" value="1"/>
</dbReference>
<dbReference type="CDD" id="cd18790">
    <property type="entry name" value="SF2_C_UvrB"/>
    <property type="match status" value="1"/>
</dbReference>
<dbReference type="FunFam" id="3.40.50.300:FF:000257">
    <property type="entry name" value="UvrABC system protein B"/>
    <property type="match status" value="1"/>
</dbReference>
<dbReference type="FunFam" id="3.40.50.300:FF:000401">
    <property type="entry name" value="UvrABC system protein B"/>
    <property type="match status" value="1"/>
</dbReference>
<dbReference type="FunFam" id="3.40.50.300:FF:000477">
    <property type="entry name" value="UvrABC system protein B"/>
    <property type="match status" value="1"/>
</dbReference>
<dbReference type="Gene3D" id="6.10.140.240">
    <property type="match status" value="1"/>
</dbReference>
<dbReference type="Gene3D" id="3.40.50.300">
    <property type="entry name" value="P-loop containing nucleotide triphosphate hydrolases"/>
    <property type="match status" value="3"/>
</dbReference>
<dbReference type="Gene3D" id="4.10.860.10">
    <property type="entry name" value="UVR domain"/>
    <property type="match status" value="1"/>
</dbReference>
<dbReference type="HAMAP" id="MF_00204">
    <property type="entry name" value="UvrB"/>
    <property type="match status" value="1"/>
</dbReference>
<dbReference type="InterPro" id="IPR006935">
    <property type="entry name" value="Helicase/UvrB_N"/>
</dbReference>
<dbReference type="InterPro" id="IPR014001">
    <property type="entry name" value="Helicase_ATP-bd"/>
</dbReference>
<dbReference type="InterPro" id="IPR001650">
    <property type="entry name" value="Helicase_C-like"/>
</dbReference>
<dbReference type="InterPro" id="IPR027417">
    <property type="entry name" value="P-loop_NTPase"/>
</dbReference>
<dbReference type="InterPro" id="IPR001943">
    <property type="entry name" value="UVR_dom"/>
</dbReference>
<dbReference type="InterPro" id="IPR036876">
    <property type="entry name" value="UVR_dom_sf"/>
</dbReference>
<dbReference type="InterPro" id="IPR004807">
    <property type="entry name" value="UvrB"/>
</dbReference>
<dbReference type="InterPro" id="IPR041471">
    <property type="entry name" value="UvrB_inter"/>
</dbReference>
<dbReference type="InterPro" id="IPR024759">
    <property type="entry name" value="UvrB_YAD/RRR_dom"/>
</dbReference>
<dbReference type="NCBIfam" id="NF003673">
    <property type="entry name" value="PRK05298.1"/>
    <property type="match status" value="1"/>
</dbReference>
<dbReference type="NCBIfam" id="TIGR00631">
    <property type="entry name" value="uvrb"/>
    <property type="match status" value="1"/>
</dbReference>
<dbReference type="PANTHER" id="PTHR24029">
    <property type="entry name" value="UVRABC SYSTEM PROTEIN B"/>
    <property type="match status" value="1"/>
</dbReference>
<dbReference type="PANTHER" id="PTHR24029:SF0">
    <property type="entry name" value="UVRABC SYSTEM PROTEIN B"/>
    <property type="match status" value="1"/>
</dbReference>
<dbReference type="Pfam" id="PF00271">
    <property type="entry name" value="Helicase_C"/>
    <property type="match status" value="1"/>
</dbReference>
<dbReference type="Pfam" id="PF04851">
    <property type="entry name" value="ResIII"/>
    <property type="match status" value="1"/>
</dbReference>
<dbReference type="Pfam" id="PF02151">
    <property type="entry name" value="UVR"/>
    <property type="match status" value="1"/>
</dbReference>
<dbReference type="Pfam" id="PF12344">
    <property type="entry name" value="UvrB"/>
    <property type="match status" value="1"/>
</dbReference>
<dbReference type="Pfam" id="PF17757">
    <property type="entry name" value="UvrB_inter"/>
    <property type="match status" value="1"/>
</dbReference>
<dbReference type="SMART" id="SM00487">
    <property type="entry name" value="DEXDc"/>
    <property type="match status" value="1"/>
</dbReference>
<dbReference type="SMART" id="SM00490">
    <property type="entry name" value="HELICc"/>
    <property type="match status" value="1"/>
</dbReference>
<dbReference type="SUPFAM" id="SSF46600">
    <property type="entry name" value="C-terminal UvrC-binding domain of UvrB"/>
    <property type="match status" value="1"/>
</dbReference>
<dbReference type="SUPFAM" id="SSF52540">
    <property type="entry name" value="P-loop containing nucleoside triphosphate hydrolases"/>
    <property type="match status" value="2"/>
</dbReference>
<dbReference type="PROSITE" id="PS51192">
    <property type="entry name" value="HELICASE_ATP_BIND_1"/>
    <property type="match status" value="1"/>
</dbReference>
<dbReference type="PROSITE" id="PS51194">
    <property type="entry name" value="HELICASE_CTER"/>
    <property type="match status" value="1"/>
</dbReference>
<dbReference type="PROSITE" id="PS50151">
    <property type="entry name" value="UVR"/>
    <property type="match status" value="1"/>
</dbReference>
<proteinExistence type="inferred from homology"/>
<feature type="chain" id="PRO_0000138423" description="UvrABC system protein B">
    <location>
        <begin position="1"/>
        <end position="673"/>
    </location>
</feature>
<feature type="domain" description="Helicase ATP-binding" evidence="1">
    <location>
        <begin position="26"/>
        <end position="414"/>
    </location>
</feature>
<feature type="domain" description="Helicase C-terminal" evidence="1">
    <location>
        <begin position="431"/>
        <end position="597"/>
    </location>
</feature>
<feature type="domain" description="UVR" evidence="1">
    <location>
        <begin position="633"/>
        <end position="668"/>
    </location>
</feature>
<feature type="short sequence motif" description="Beta-hairpin">
    <location>
        <begin position="92"/>
        <end position="115"/>
    </location>
</feature>
<feature type="binding site" evidence="1">
    <location>
        <begin position="39"/>
        <end position="46"/>
    </location>
    <ligand>
        <name>ATP</name>
        <dbReference type="ChEBI" id="CHEBI:30616"/>
    </ligand>
</feature>
<protein>
    <recommendedName>
        <fullName evidence="1">UvrABC system protein B</fullName>
        <shortName evidence="1">Protein UvrB</shortName>
    </recommendedName>
    <alternativeName>
        <fullName evidence="1">Excinuclease ABC subunit B</fullName>
    </alternativeName>
</protein>
<sequence length="673" mass="76135">MSKPFKLNSAFKPSGDQPDAIRRLEEGLEDGLAHQTLLGVTGSGKTFTIANVIADLQRPTMVLAPNKTLAAQLYGEMKEFFPENAVEYFVSYYDYYQPEAYVPSSDTFIEKDASVNEHIEQMRLSATKALLERRDVVVVASVSAIYGLGDPDLYLKMMLHLTVGMLIDQRAILRRLAELQYTRNDQAFQRGTFRVRGEVIDIFPAESDDIALRVELFDEEVERLSLFDPLTGQVESTVPRYTIYPKTHYVTPRERILQAMEEIKDELADRRKVLLANNKLLEEQRLSQRTQFDLEMMNELGYCSGIENYSRFLSGRGPGEPPPTLFDYLPADGLLVVDESHVTIPQIGGMYRGDRARKETLVEYGFRLPSALDNRPLKFEEFEALAPQTIYVSATPGNYELEKSGDEVVDQVVRPTGLLDPIIEVRPVATQVDDLLSEIRQRAAINERVLVTTLTKRMAEDLTEYLEEHGERVRYLHSDIDTVERMEIIRDLRLGEFDVLVGINLLREGLDMPEVSLVAILDADKEGFLRSERSLIQTIGRAARNVNGKAILYGDKITPSMAKAIGETERRREKQQKYNEEHGITPQGLNKKVVDILALGQNIAKTKAKGKGKGRSTAKAGIVELDMTPKALQQKIHELEGQMMQHAQNLEFEEAAQIRDQLHQLRELFIAAS</sequence>
<comment type="function">
    <text evidence="1">The UvrABC repair system catalyzes the recognition and processing of DNA lesions. A damage recognition complex composed of 2 UvrA and 2 UvrB subunits scans DNA for abnormalities. Upon binding of the UvrA(2)B(2) complex to a putative damaged site, the DNA wraps around one UvrB monomer. DNA wrap is dependent on ATP binding by UvrB and probably causes local melting of the DNA helix, facilitating insertion of UvrB beta-hairpin between the DNA strands. Then UvrB probes one DNA strand for the presence of a lesion. If a lesion is found the UvrA subunits dissociate and the UvrB-DNA preincision complex is formed. This complex is subsequently bound by UvrC and the second UvrB is released. If no lesion is found, the DNA wraps around the other UvrB subunit that will check the other stand for damage.</text>
</comment>
<comment type="subunit">
    <text evidence="1">Forms a heterotetramer with UvrA during the search for lesions. Interacts with UvrC in an incision complex.</text>
</comment>
<comment type="subcellular location">
    <subcellularLocation>
        <location evidence="1">Cytoplasm</location>
    </subcellularLocation>
</comment>
<comment type="domain">
    <text evidence="1">The beta-hairpin motif is involved in DNA binding.</text>
</comment>
<comment type="similarity">
    <text evidence="1">Belongs to the UvrB family.</text>
</comment>
<accession>Q8ZQQ4</accession>
<keyword id="KW-0067">ATP-binding</keyword>
<keyword id="KW-0963">Cytoplasm</keyword>
<keyword id="KW-0227">DNA damage</keyword>
<keyword id="KW-0228">DNA excision</keyword>
<keyword id="KW-0234">DNA repair</keyword>
<keyword id="KW-0267">Excision nuclease</keyword>
<keyword id="KW-0547">Nucleotide-binding</keyword>
<keyword id="KW-1185">Reference proteome</keyword>
<keyword id="KW-0742">SOS response</keyword>
<evidence type="ECO:0000255" key="1">
    <source>
        <dbReference type="HAMAP-Rule" id="MF_00204"/>
    </source>
</evidence>
<gene>
    <name evidence="1" type="primary">uvrB</name>
    <name type="ordered locus">STM0798</name>
</gene>
<name>UVRB_SALTY</name>
<organism>
    <name type="scientific">Salmonella typhimurium (strain LT2 / SGSC1412 / ATCC 700720)</name>
    <dbReference type="NCBI Taxonomy" id="99287"/>
    <lineage>
        <taxon>Bacteria</taxon>
        <taxon>Pseudomonadati</taxon>
        <taxon>Pseudomonadota</taxon>
        <taxon>Gammaproteobacteria</taxon>
        <taxon>Enterobacterales</taxon>
        <taxon>Enterobacteriaceae</taxon>
        <taxon>Salmonella</taxon>
    </lineage>
</organism>